<comment type="catalytic activity">
    <reaction evidence="1">
        <text>tRNA(Gly) + glycine + ATP = glycyl-tRNA(Gly) + AMP + diphosphate</text>
        <dbReference type="Rhea" id="RHEA:16013"/>
        <dbReference type="Rhea" id="RHEA-COMP:9664"/>
        <dbReference type="Rhea" id="RHEA-COMP:9683"/>
        <dbReference type="ChEBI" id="CHEBI:30616"/>
        <dbReference type="ChEBI" id="CHEBI:33019"/>
        <dbReference type="ChEBI" id="CHEBI:57305"/>
        <dbReference type="ChEBI" id="CHEBI:78442"/>
        <dbReference type="ChEBI" id="CHEBI:78522"/>
        <dbReference type="ChEBI" id="CHEBI:456215"/>
        <dbReference type="EC" id="6.1.1.14"/>
    </reaction>
</comment>
<comment type="subunit">
    <text evidence="1">Tetramer of two alpha and two beta subunits.</text>
</comment>
<comment type="subcellular location">
    <subcellularLocation>
        <location evidence="1">Cytoplasm</location>
    </subcellularLocation>
</comment>
<comment type="similarity">
    <text evidence="1">Belongs to the class-II aminoacyl-tRNA synthetase family.</text>
</comment>
<keyword id="KW-0030">Aminoacyl-tRNA synthetase</keyword>
<keyword id="KW-0067">ATP-binding</keyword>
<keyword id="KW-0963">Cytoplasm</keyword>
<keyword id="KW-0436">Ligase</keyword>
<keyword id="KW-0547">Nucleotide-binding</keyword>
<keyword id="KW-0648">Protein biosynthesis</keyword>
<keyword id="KW-1185">Reference proteome</keyword>
<feature type="chain" id="PRO_1000101316" description="Glycine--tRNA ligase beta subunit">
    <location>
        <begin position="1"/>
        <end position="690"/>
    </location>
</feature>
<proteinExistence type="inferred from homology"/>
<evidence type="ECO:0000255" key="1">
    <source>
        <dbReference type="HAMAP-Rule" id="MF_00255"/>
    </source>
</evidence>
<name>SYGB_PROMH</name>
<gene>
    <name evidence="1" type="primary">glyS</name>
    <name type="ordered locus">PMI2855</name>
</gene>
<organism>
    <name type="scientific">Proteus mirabilis (strain HI4320)</name>
    <dbReference type="NCBI Taxonomy" id="529507"/>
    <lineage>
        <taxon>Bacteria</taxon>
        <taxon>Pseudomonadati</taxon>
        <taxon>Pseudomonadota</taxon>
        <taxon>Gammaproteobacteria</taxon>
        <taxon>Enterobacterales</taxon>
        <taxon>Morganellaceae</taxon>
        <taxon>Proteus</taxon>
    </lineage>
</organism>
<sequence length="690" mass="76917">MTTETFLVEIGTEELPPKALRSLAESFATHFTAELDNANITHGDVSWFAAPRRLAIKVANMAKSQADRIVEKRGPAIAQAFDAEGKPTKAAEGWARGNGITVDQAERLSTDKGEWLFYRAEVKGEAVNQLLAGMVSNALAKLPIPKLMRWGDKETHFVRPVHTVTLLLGDTLIDGEILGVQSARIIRGHRFMGEAEFTIDNADQYPEILYERGKVIADYENRKSIILHDARLAAEKLGGVADLSDSLVEEVTSLVEWPVVLTAKFEEKFLEVPAEALVYTMKGDQKYFPVYDKQGALLPHFIFVSNIESSDPQQIISGNEKVVRPRLADAEFFFKTDRKQRLEDNLPRLETVLFQKNLGSLRDKTDRIQALAGFIAEKMGADVNKATRAGLLSKCDLMTNMVFEFTDTQGVMGMHYARHDGEDEEVAVALKEQYQPRFAGDALPSNPVASAVAIAEKMDTLAGIFGIGQHPKGDKDPFALRRAALGVLRIIVEQDLPLDIEELTQEAARLYGDKLTNQNVVSDVVEFMLGRFRAWYQELGYSIDTIQAVLARRPTQPADFNARVKAVTYFRTLEEAAALAEANKRVSNILAKSADVKLNDKVLASVLKAPEEVQLAANLSVLQDKLAPLFAERKYQEALVELASLRDVVNNFFDKVMVMDKDEEIRVNRLTMLHELRELFLKVADISVLQ</sequence>
<dbReference type="EC" id="6.1.1.14" evidence="1"/>
<dbReference type="EMBL" id="AM942759">
    <property type="protein sequence ID" value="CAR45626.1"/>
    <property type="molecule type" value="Genomic_DNA"/>
</dbReference>
<dbReference type="RefSeq" id="WP_012368525.1">
    <property type="nucleotide sequence ID" value="NC_010554.1"/>
</dbReference>
<dbReference type="SMR" id="B4EZ95"/>
<dbReference type="DNASU" id="6802649"/>
<dbReference type="EnsemblBacteria" id="CAR45626">
    <property type="protein sequence ID" value="CAR45626"/>
    <property type="gene ID" value="PMI2855"/>
</dbReference>
<dbReference type="GeneID" id="6802649"/>
<dbReference type="KEGG" id="pmr:PMI2855"/>
<dbReference type="PATRIC" id="fig|529507.6.peg.2786"/>
<dbReference type="eggNOG" id="COG0751">
    <property type="taxonomic scope" value="Bacteria"/>
</dbReference>
<dbReference type="HOGENOM" id="CLU_007220_2_2_6"/>
<dbReference type="Proteomes" id="UP000008319">
    <property type="component" value="Chromosome"/>
</dbReference>
<dbReference type="GO" id="GO:0005829">
    <property type="term" value="C:cytosol"/>
    <property type="evidence" value="ECO:0007669"/>
    <property type="project" value="TreeGrafter"/>
</dbReference>
<dbReference type="GO" id="GO:0004814">
    <property type="term" value="F:arginine-tRNA ligase activity"/>
    <property type="evidence" value="ECO:0007669"/>
    <property type="project" value="InterPro"/>
</dbReference>
<dbReference type="GO" id="GO:0005524">
    <property type="term" value="F:ATP binding"/>
    <property type="evidence" value="ECO:0007669"/>
    <property type="project" value="UniProtKB-UniRule"/>
</dbReference>
<dbReference type="GO" id="GO:0004820">
    <property type="term" value="F:glycine-tRNA ligase activity"/>
    <property type="evidence" value="ECO:0007669"/>
    <property type="project" value="UniProtKB-UniRule"/>
</dbReference>
<dbReference type="GO" id="GO:0006420">
    <property type="term" value="P:arginyl-tRNA aminoacylation"/>
    <property type="evidence" value="ECO:0007669"/>
    <property type="project" value="InterPro"/>
</dbReference>
<dbReference type="GO" id="GO:0006426">
    <property type="term" value="P:glycyl-tRNA aminoacylation"/>
    <property type="evidence" value="ECO:0007669"/>
    <property type="project" value="UniProtKB-UniRule"/>
</dbReference>
<dbReference type="HAMAP" id="MF_00255">
    <property type="entry name" value="Gly_tRNA_synth_beta"/>
    <property type="match status" value="1"/>
</dbReference>
<dbReference type="InterPro" id="IPR008909">
    <property type="entry name" value="DALR_anticod-bd"/>
</dbReference>
<dbReference type="InterPro" id="IPR015944">
    <property type="entry name" value="Gly-tRNA-synth_bsu"/>
</dbReference>
<dbReference type="InterPro" id="IPR006194">
    <property type="entry name" value="Gly-tRNA-synth_heterodimer"/>
</dbReference>
<dbReference type="NCBIfam" id="TIGR00211">
    <property type="entry name" value="glyS"/>
    <property type="match status" value="1"/>
</dbReference>
<dbReference type="PANTHER" id="PTHR30075:SF2">
    <property type="entry name" value="GLYCINE--TRNA LIGASE, CHLOROPLASTIC_MITOCHONDRIAL 2"/>
    <property type="match status" value="1"/>
</dbReference>
<dbReference type="PANTHER" id="PTHR30075">
    <property type="entry name" value="GLYCYL-TRNA SYNTHETASE"/>
    <property type="match status" value="1"/>
</dbReference>
<dbReference type="Pfam" id="PF05746">
    <property type="entry name" value="DALR_1"/>
    <property type="match status" value="1"/>
</dbReference>
<dbReference type="Pfam" id="PF02092">
    <property type="entry name" value="tRNA_synt_2f"/>
    <property type="match status" value="1"/>
</dbReference>
<dbReference type="PRINTS" id="PR01045">
    <property type="entry name" value="TRNASYNTHGB"/>
</dbReference>
<dbReference type="SUPFAM" id="SSF109604">
    <property type="entry name" value="HD-domain/PDEase-like"/>
    <property type="match status" value="1"/>
</dbReference>
<dbReference type="PROSITE" id="PS50861">
    <property type="entry name" value="AA_TRNA_LIGASE_II_GLYAB"/>
    <property type="match status" value="1"/>
</dbReference>
<accession>B4EZ95</accession>
<protein>
    <recommendedName>
        <fullName evidence="1">Glycine--tRNA ligase beta subunit</fullName>
        <ecNumber evidence="1">6.1.1.14</ecNumber>
    </recommendedName>
    <alternativeName>
        <fullName evidence="1">Glycyl-tRNA synthetase beta subunit</fullName>
        <shortName evidence="1">GlyRS</shortName>
    </alternativeName>
</protein>
<reference key="1">
    <citation type="journal article" date="2008" name="J. Bacteriol.">
        <title>Complete genome sequence of uropathogenic Proteus mirabilis, a master of both adherence and motility.</title>
        <authorList>
            <person name="Pearson M.M."/>
            <person name="Sebaihia M."/>
            <person name="Churcher C."/>
            <person name="Quail M.A."/>
            <person name="Seshasayee A.S."/>
            <person name="Luscombe N.M."/>
            <person name="Abdellah Z."/>
            <person name="Arrosmith C."/>
            <person name="Atkin B."/>
            <person name="Chillingworth T."/>
            <person name="Hauser H."/>
            <person name="Jagels K."/>
            <person name="Moule S."/>
            <person name="Mungall K."/>
            <person name="Norbertczak H."/>
            <person name="Rabbinowitsch E."/>
            <person name="Walker D."/>
            <person name="Whithead S."/>
            <person name="Thomson N.R."/>
            <person name="Rather P.N."/>
            <person name="Parkhill J."/>
            <person name="Mobley H.L.T."/>
        </authorList>
    </citation>
    <scope>NUCLEOTIDE SEQUENCE [LARGE SCALE GENOMIC DNA]</scope>
    <source>
        <strain>HI4320</strain>
    </source>
</reference>